<comment type="catalytic activity">
    <reaction>
        <text>tRNA(Arg) + L-arginine + ATP = L-arginyl-tRNA(Arg) + AMP + diphosphate</text>
        <dbReference type="Rhea" id="RHEA:20301"/>
        <dbReference type="Rhea" id="RHEA-COMP:9658"/>
        <dbReference type="Rhea" id="RHEA-COMP:9673"/>
        <dbReference type="ChEBI" id="CHEBI:30616"/>
        <dbReference type="ChEBI" id="CHEBI:32682"/>
        <dbReference type="ChEBI" id="CHEBI:33019"/>
        <dbReference type="ChEBI" id="CHEBI:78442"/>
        <dbReference type="ChEBI" id="CHEBI:78513"/>
        <dbReference type="ChEBI" id="CHEBI:456215"/>
        <dbReference type="EC" id="6.1.1.19"/>
    </reaction>
</comment>
<comment type="subunit">
    <text evidence="1">Monomer.</text>
</comment>
<comment type="subcellular location">
    <subcellularLocation>
        <location evidence="1">Cytoplasm</location>
    </subcellularLocation>
</comment>
<comment type="similarity">
    <text evidence="2">Belongs to the class-I aminoacyl-tRNA synthetase family.</text>
</comment>
<accession>Q55486</accession>
<name>SYR_SYNY3</name>
<sequence>MVSILTQLNDHFAQALEGQFPSDVTLPTPLVVPASNPKFGDFQCNIALPLAKQLGQPPRAIAMEIVDKVNLSEICEPLTIAGPGFINIKLLPDYLGEQLIKLQQNQQLGVSLVKGEERIVVDFSSPNIAKEMHVGHLRSTIIGDCLARVLEFRGYDVLRLNHVGDWGTQFGMLITYLKEVYPEALVTADALDIGDLVTFYKQAKQRFDQDEQFRETSRQAVVALQAGDAKSIKAWQLLCEQSRREFQLIYDCLDITIEERGESFYNPFLPGVVELLQEKDLLVEDNGAQCVFLDGFTNKDGDRLPLIVQKSDGGYNYATTDLAALNYRLNTDGAEKIIYVTDAGQANHFAQFFQVAEKAGILTDPTQVVHVPFGLVKGEDGKKLKTRAGDTIRLKDLLTEAVTRARQDLETRLTAEERSETEEFKTEVAQRVGIGAVKYADLSQNRTSDYVFSFDKMLALQGNTAPYMLYAYARIQSISREGGIDFAQMDSGEIVLTEPTELVLAKNLLQFADVIETVEISLLPNRLCDYLYELSKVFNRFYENCPVLKASDPQRGSRLLLCDLTARTLKLGLSLLGIPVLDRM</sequence>
<feature type="chain" id="PRO_0000151627" description="Arginine--tRNA ligase">
    <location>
        <begin position="1"/>
        <end position="584"/>
    </location>
</feature>
<feature type="short sequence motif" description="'HIGH' region">
    <location>
        <begin position="126"/>
        <end position="136"/>
    </location>
</feature>
<evidence type="ECO:0000250" key="1"/>
<evidence type="ECO:0000305" key="2"/>
<organism>
    <name type="scientific">Synechocystis sp. (strain ATCC 27184 / PCC 6803 / Kazusa)</name>
    <dbReference type="NCBI Taxonomy" id="1111708"/>
    <lineage>
        <taxon>Bacteria</taxon>
        <taxon>Bacillati</taxon>
        <taxon>Cyanobacteriota</taxon>
        <taxon>Cyanophyceae</taxon>
        <taxon>Synechococcales</taxon>
        <taxon>Merismopediaceae</taxon>
        <taxon>Synechocystis</taxon>
    </lineage>
</organism>
<dbReference type="EC" id="6.1.1.19"/>
<dbReference type="EMBL" id="BA000022">
    <property type="protein sequence ID" value="BAA10833.1"/>
    <property type="molecule type" value="Genomic_DNA"/>
</dbReference>
<dbReference type="PIR" id="S75986">
    <property type="entry name" value="S75986"/>
</dbReference>
<dbReference type="SMR" id="Q55486"/>
<dbReference type="FunCoup" id="Q55486">
    <property type="interactions" value="442"/>
</dbReference>
<dbReference type="IntAct" id="Q55486">
    <property type="interactions" value="3"/>
</dbReference>
<dbReference type="STRING" id="1148.gene:10500337"/>
<dbReference type="PaxDb" id="1148-1001346"/>
<dbReference type="EnsemblBacteria" id="BAA10833">
    <property type="protein sequence ID" value="BAA10833"/>
    <property type="gene ID" value="BAA10833"/>
</dbReference>
<dbReference type="KEGG" id="syn:sll0502"/>
<dbReference type="eggNOG" id="COG0018">
    <property type="taxonomic scope" value="Bacteria"/>
</dbReference>
<dbReference type="InParanoid" id="Q55486"/>
<dbReference type="PhylomeDB" id="Q55486"/>
<dbReference type="Proteomes" id="UP000001425">
    <property type="component" value="Chromosome"/>
</dbReference>
<dbReference type="GO" id="GO:0005737">
    <property type="term" value="C:cytoplasm"/>
    <property type="evidence" value="ECO:0007669"/>
    <property type="project" value="UniProtKB-SubCell"/>
</dbReference>
<dbReference type="GO" id="GO:0004814">
    <property type="term" value="F:arginine-tRNA ligase activity"/>
    <property type="evidence" value="ECO:0000318"/>
    <property type="project" value="GO_Central"/>
</dbReference>
<dbReference type="GO" id="GO:0005524">
    <property type="term" value="F:ATP binding"/>
    <property type="evidence" value="ECO:0007669"/>
    <property type="project" value="UniProtKB-UniRule"/>
</dbReference>
<dbReference type="GO" id="GO:0006420">
    <property type="term" value="P:arginyl-tRNA aminoacylation"/>
    <property type="evidence" value="ECO:0000318"/>
    <property type="project" value="GO_Central"/>
</dbReference>
<dbReference type="CDD" id="cd07956">
    <property type="entry name" value="Anticodon_Ia_Arg"/>
    <property type="match status" value="1"/>
</dbReference>
<dbReference type="CDD" id="cd00671">
    <property type="entry name" value="ArgRS_core"/>
    <property type="match status" value="1"/>
</dbReference>
<dbReference type="FunFam" id="3.40.50.620:FF:000030">
    <property type="entry name" value="Arginine--tRNA ligase"/>
    <property type="match status" value="1"/>
</dbReference>
<dbReference type="FunFam" id="1.10.730.10:FF:000006">
    <property type="entry name" value="Arginyl-tRNA synthetase 2, mitochondrial"/>
    <property type="match status" value="1"/>
</dbReference>
<dbReference type="Gene3D" id="3.30.1360.70">
    <property type="entry name" value="Arginyl tRNA synthetase N-terminal domain"/>
    <property type="match status" value="1"/>
</dbReference>
<dbReference type="Gene3D" id="3.40.50.620">
    <property type="entry name" value="HUPs"/>
    <property type="match status" value="1"/>
</dbReference>
<dbReference type="Gene3D" id="1.10.730.10">
    <property type="entry name" value="Isoleucyl-tRNA Synthetase, Domain 1"/>
    <property type="match status" value="1"/>
</dbReference>
<dbReference type="HAMAP" id="MF_00123">
    <property type="entry name" value="Arg_tRNA_synth"/>
    <property type="match status" value="1"/>
</dbReference>
<dbReference type="InterPro" id="IPR001412">
    <property type="entry name" value="aa-tRNA-synth_I_CS"/>
</dbReference>
<dbReference type="InterPro" id="IPR001278">
    <property type="entry name" value="Arg-tRNA-ligase"/>
</dbReference>
<dbReference type="InterPro" id="IPR005148">
    <property type="entry name" value="Arg-tRNA-synth_N"/>
</dbReference>
<dbReference type="InterPro" id="IPR036695">
    <property type="entry name" value="Arg-tRNA-synth_N_sf"/>
</dbReference>
<dbReference type="InterPro" id="IPR035684">
    <property type="entry name" value="ArgRS_core"/>
</dbReference>
<dbReference type="InterPro" id="IPR008909">
    <property type="entry name" value="DALR_anticod-bd"/>
</dbReference>
<dbReference type="InterPro" id="IPR014729">
    <property type="entry name" value="Rossmann-like_a/b/a_fold"/>
</dbReference>
<dbReference type="InterPro" id="IPR009080">
    <property type="entry name" value="tRNAsynth_Ia_anticodon-bd"/>
</dbReference>
<dbReference type="NCBIfam" id="TIGR00456">
    <property type="entry name" value="argS"/>
    <property type="match status" value="1"/>
</dbReference>
<dbReference type="PANTHER" id="PTHR11956:SF5">
    <property type="entry name" value="ARGININE--TRNA LIGASE, CYTOPLASMIC"/>
    <property type="match status" value="1"/>
</dbReference>
<dbReference type="PANTHER" id="PTHR11956">
    <property type="entry name" value="ARGINYL-TRNA SYNTHETASE"/>
    <property type="match status" value="1"/>
</dbReference>
<dbReference type="Pfam" id="PF03485">
    <property type="entry name" value="Arg_tRNA_synt_N"/>
    <property type="match status" value="1"/>
</dbReference>
<dbReference type="Pfam" id="PF05746">
    <property type="entry name" value="DALR_1"/>
    <property type="match status" value="1"/>
</dbReference>
<dbReference type="Pfam" id="PF00750">
    <property type="entry name" value="tRNA-synt_1d"/>
    <property type="match status" value="1"/>
</dbReference>
<dbReference type="PRINTS" id="PR01038">
    <property type="entry name" value="TRNASYNTHARG"/>
</dbReference>
<dbReference type="SMART" id="SM01016">
    <property type="entry name" value="Arg_tRNA_synt_N"/>
    <property type="match status" value="1"/>
</dbReference>
<dbReference type="SMART" id="SM00836">
    <property type="entry name" value="DALR_1"/>
    <property type="match status" value="1"/>
</dbReference>
<dbReference type="SUPFAM" id="SSF47323">
    <property type="entry name" value="Anticodon-binding domain of a subclass of class I aminoacyl-tRNA synthetases"/>
    <property type="match status" value="1"/>
</dbReference>
<dbReference type="SUPFAM" id="SSF55190">
    <property type="entry name" value="Arginyl-tRNA synthetase (ArgRS), N-terminal 'additional' domain"/>
    <property type="match status" value="1"/>
</dbReference>
<dbReference type="SUPFAM" id="SSF52374">
    <property type="entry name" value="Nucleotidylyl transferase"/>
    <property type="match status" value="1"/>
</dbReference>
<dbReference type="PROSITE" id="PS00178">
    <property type="entry name" value="AA_TRNA_LIGASE_I"/>
    <property type="match status" value="1"/>
</dbReference>
<reference key="1">
    <citation type="journal article" date="1995" name="DNA Res.">
        <title>Sequence analysis of the genome of the unicellular cyanobacterium Synechocystis sp. strain PCC6803. I. Sequence features in the 1 Mb region from map positions 64% to 92% of the genome.</title>
        <authorList>
            <person name="Kaneko T."/>
            <person name="Tanaka A."/>
            <person name="Sato S."/>
            <person name="Kotani H."/>
            <person name="Sazuka T."/>
            <person name="Miyajima N."/>
            <person name="Sugiura M."/>
            <person name="Tabata S."/>
        </authorList>
    </citation>
    <scope>NUCLEOTIDE SEQUENCE [LARGE SCALE GENOMIC DNA]</scope>
    <source>
        <strain>ATCC 27184 / PCC 6803 / N-1</strain>
    </source>
</reference>
<reference key="2">
    <citation type="journal article" date="1996" name="DNA Res.">
        <title>Sequence analysis of the genome of the unicellular cyanobacterium Synechocystis sp. strain PCC6803. II. Sequence determination of the entire genome and assignment of potential protein-coding regions.</title>
        <authorList>
            <person name="Kaneko T."/>
            <person name="Sato S."/>
            <person name="Kotani H."/>
            <person name="Tanaka A."/>
            <person name="Asamizu E."/>
            <person name="Nakamura Y."/>
            <person name="Miyajima N."/>
            <person name="Hirosawa M."/>
            <person name="Sugiura M."/>
            <person name="Sasamoto S."/>
            <person name="Kimura T."/>
            <person name="Hosouchi T."/>
            <person name="Matsuno A."/>
            <person name="Muraki A."/>
            <person name="Nakazaki N."/>
            <person name="Naruo K."/>
            <person name="Okumura S."/>
            <person name="Shimpo S."/>
            <person name="Takeuchi C."/>
            <person name="Wada T."/>
            <person name="Watanabe A."/>
            <person name="Yamada M."/>
            <person name="Yasuda M."/>
            <person name="Tabata S."/>
        </authorList>
    </citation>
    <scope>NUCLEOTIDE SEQUENCE [LARGE SCALE GENOMIC DNA]</scope>
    <source>
        <strain>ATCC 27184 / PCC 6803 / Kazusa</strain>
    </source>
</reference>
<proteinExistence type="inferred from homology"/>
<keyword id="KW-0030">Aminoacyl-tRNA synthetase</keyword>
<keyword id="KW-0067">ATP-binding</keyword>
<keyword id="KW-0963">Cytoplasm</keyword>
<keyword id="KW-0436">Ligase</keyword>
<keyword id="KW-0547">Nucleotide-binding</keyword>
<keyword id="KW-0648">Protein biosynthesis</keyword>
<keyword id="KW-1185">Reference proteome</keyword>
<protein>
    <recommendedName>
        <fullName>Arginine--tRNA ligase</fullName>
        <ecNumber>6.1.1.19</ecNumber>
    </recommendedName>
    <alternativeName>
        <fullName>Arginyl-tRNA synthetase</fullName>
        <shortName>ArgRS</shortName>
    </alternativeName>
</protein>
<gene>
    <name type="primary">argS</name>
    <name type="ordered locus">sll0502</name>
</gene>